<evidence type="ECO:0000255" key="1">
    <source>
        <dbReference type="HAMAP-Rule" id="MF_00021"/>
    </source>
</evidence>
<keyword id="KW-0067">ATP-binding</keyword>
<keyword id="KW-0963">Cytoplasm</keyword>
<keyword id="KW-0547">Nucleotide-binding</keyword>
<keyword id="KW-1185">Reference proteome</keyword>
<keyword id="KW-0694">RNA-binding</keyword>
<keyword id="KW-0784">Thiamine biosynthesis</keyword>
<keyword id="KW-0808">Transferase</keyword>
<keyword id="KW-0820">tRNA-binding</keyword>
<gene>
    <name evidence="1" type="primary">thiI</name>
    <name type="ordered locus">SSO0333</name>
</gene>
<accession>Q980G6</accession>
<organism>
    <name type="scientific">Saccharolobus solfataricus (strain ATCC 35092 / DSM 1617 / JCM 11322 / P2)</name>
    <name type="common">Sulfolobus solfataricus</name>
    <dbReference type="NCBI Taxonomy" id="273057"/>
    <lineage>
        <taxon>Archaea</taxon>
        <taxon>Thermoproteota</taxon>
        <taxon>Thermoprotei</taxon>
        <taxon>Sulfolobales</taxon>
        <taxon>Sulfolobaceae</taxon>
        <taxon>Saccharolobus</taxon>
    </lineage>
</organism>
<protein>
    <recommendedName>
        <fullName evidence="1">Probable tRNA sulfurtransferase</fullName>
        <ecNumber evidence="1">2.8.1.4</ecNumber>
    </recommendedName>
    <alternativeName>
        <fullName evidence="1">Sulfur carrier protein ThiS sulfurtransferase</fullName>
    </alternativeName>
    <alternativeName>
        <fullName evidence="1">Thiamine biosynthesis protein ThiI</fullName>
    </alternativeName>
    <alternativeName>
        <fullName evidence="1">tRNA 4-thiouridine synthase</fullName>
    </alternativeName>
</protein>
<dbReference type="EC" id="2.8.1.4" evidence="1"/>
<dbReference type="EMBL" id="AE006641">
    <property type="protein sequence ID" value="AAK40666.1"/>
    <property type="molecule type" value="Genomic_DNA"/>
</dbReference>
<dbReference type="PIR" id="C90176">
    <property type="entry name" value="C90176"/>
</dbReference>
<dbReference type="RefSeq" id="WP_009990625.1">
    <property type="nucleotide sequence ID" value="NC_002754.1"/>
</dbReference>
<dbReference type="SMR" id="Q980G6"/>
<dbReference type="FunCoup" id="Q980G6">
    <property type="interactions" value="104"/>
</dbReference>
<dbReference type="STRING" id="273057.SSO0333"/>
<dbReference type="PaxDb" id="273057-SSO0333"/>
<dbReference type="EnsemblBacteria" id="AAK40666">
    <property type="protein sequence ID" value="AAK40666"/>
    <property type="gene ID" value="SSO0333"/>
</dbReference>
<dbReference type="GeneID" id="44129306"/>
<dbReference type="KEGG" id="sso:SSO0333"/>
<dbReference type="PATRIC" id="fig|273057.12.peg.326"/>
<dbReference type="eggNOG" id="arCOG00038">
    <property type="taxonomic scope" value="Archaea"/>
</dbReference>
<dbReference type="HOGENOM" id="CLU_037952_4_0_2"/>
<dbReference type="InParanoid" id="Q980G6"/>
<dbReference type="PhylomeDB" id="Q980G6"/>
<dbReference type="UniPathway" id="UPA00060"/>
<dbReference type="Proteomes" id="UP000001974">
    <property type="component" value="Chromosome"/>
</dbReference>
<dbReference type="GO" id="GO:0005829">
    <property type="term" value="C:cytosol"/>
    <property type="evidence" value="ECO:0000318"/>
    <property type="project" value="GO_Central"/>
</dbReference>
<dbReference type="GO" id="GO:0005524">
    <property type="term" value="F:ATP binding"/>
    <property type="evidence" value="ECO:0007669"/>
    <property type="project" value="UniProtKB-UniRule"/>
</dbReference>
<dbReference type="GO" id="GO:0004810">
    <property type="term" value="F:CCA tRNA nucleotidyltransferase activity"/>
    <property type="evidence" value="ECO:0007669"/>
    <property type="project" value="InterPro"/>
</dbReference>
<dbReference type="GO" id="GO:0000049">
    <property type="term" value="F:tRNA binding"/>
    <property type="evidence" value="ECO:0007669"/>
    <property type="project" value="UniProtKB-UniRule"/>
</dbReference>
<dbReference type="GO" id="GO:0140741">
    <property type="term" value="F:tRNA-uracil-4 sulfurtransferase activity"/>
    <property type="evidence" value="ECO:0007669"/>
    <property type="project" value="UniProtKB-EC"/>
</dbReference>
<dbReference type="GO" id="GO:0009228">
    <property type="term" value="P:thiamine biosynthetic process"/>
    <property type="evidence" value="ECO:0007669"/>
    <property type="project" value="UniProtKB-KW"/>
</dbReference>
<dbReference type="GO" id="GO:0009229">
    <property type="term" value="P:thiamine diphosphate biosynthetic process"/>
    <property type="evidence" value="ECO:0007669"/>
    <property type="project" value="UniProtKB-UniRule"/>
</dbReference>
<dbReference type="GO" id="GO:0052837">
    <property type="term" value="P:thiazole biosynthetic process"/>
    <property type="evidence" value="ECO:0000318"/>
    <property type="project" value="GO_Central"/>
</dbReference>
<dbReference type="GO" id="GO:0002937">
    <property type="term" value="P:tRNA 4-thiouridine biosynthesis"/>
    <property type="evidence" value="ECO:0000318"/>
    <property type="project" value="GO_Central"/>
</dbReference>
<dbReference type="CDD" id="cd01712">
    <property type="entry name" value="PPase_ThiI"/>
    <property type="match status" value="1"/>
</dbReference>
<dbReference type="CDD" id="cd11716">
    <property type="entry name" value="THUMP_ThiI"/>
    <property type="match status" value="1"/>
</dbReference>
<dbReference type="FunFam" id="3.40.50.620:FF:000053">
    <property type="entry name" value="Probable tRNA sulfurtransferase"/>
    <property type="match status" value="1"/>
</dbReference>
<dbReference type="Gene3D" id="3.30.2130.30">
    <property type="match status" value="1"/>
</dbReference>
<dbReference type="Gene3D" id="3.40.50.620">
    <property type="entry name" value="HUPs"/>
    <property type="match status" value="1"/>
</dbReference>
<dbReference type="HAMAP" id="MF_00021">
    <property type="entry name" value="ThiI"/>
    <property type="match status" value="1"/>
</dbReference>
<dbReference type="InterPro" id="IPR014729">
    <property type="entry name" value="Rossmann-like_a/b/a_fold"/>
</dbReference>
<dbReference type="InterPro" id="IPR020536">
    <property type="entry name" value="ThiI_AANH"/>
</dbReference>
<dbReference type="InterPro" id="IPR054173">
    <property type="entry name" value="ThiI_fer"/>
</dbReference>
<dbReference type="InterPro" id="IPR049961">
    <property type="entry name" value="ThiI_N"/>
</dbReference>
<dbReference type="InterPro" id="IPR004114">
    <property type="entry name" value="THUMP_dom"/>
</dbReference>
<dbReference type="InterPro" id="IPR049962">
    <property type="entry name" value="THUMP_ThiI"/>
</dbReference>
<dbReference type="InterPro" id="IPR003720">
    <property type="entry name" value="tRNA_STrfase"/>
</dbReference>
<dbReference type="InterPro" id="IPR050102">
    <property type="entry name" value="tRNA_sulfurtransferase_ThiI"/>
</dbReference>
<dbReference type="NCBIfam" id="TIGR00342">
    <property type="entry name" value="tRNA uracil 4-sulfurtransferase ThiI"/>
    <property type="match status" value="1"/>
</dbReference>
<dbReference type="PANTHER" id="PTHR43209">
    <property type="entry name" value="TRNA SULFURTRANSFERASE"/>
    <property type="match status" value="1"/>
</dbReference>
<dbReference type="PANTHER" id="PTHR43209:SF1">
    <property type="entry name" value="TRNA SULFURTRANSFERASE"/>
    <property type="match status" value="1"/>
</dbReference>
<dbReference type="Pfam" id="PF02568">
    <property type="entry name" value="ThiI"/>
    <property type="match status" value="1"/>
</dbReference>
<dbReference type="Pfam" id="PF22025">
    <property type="entry name" value="ThiI_fer"/>
    <property type="match status" value="1"/>
</dbReference>
<dbReference type="Pfam" id="PF02926">
    <property type="entry name" value="THUMP"/>
    <property type="match status" value="1"/>
</dbReference>
<dbReference type="SMART" id="SM00981">
    <property type="entry name" value="THUMP"/>
    <property type="match status" value="1"/>
</dbReference>
<dbReference type="SUPFAM" id="SSF52402">
    <property type="entry name" value="Adenine nucleotide alpha hydrolases-like"/>
    <property type="match status" value="1"/>
</dbReference>
<dbReference type="SUPFAM" id="SSF143437">
    <property type="entry name" value="THUMP domain-like"/>
    <property type="match status" value="1"/>
</dbReference>
<dbReference type="PROSITE" id="PS51165">
    <property type="entry name" value="THUMP"/>
    <property type="match status" value="1"/>
</dbReference>
<name>THII_SACS2</name>
<comment type="function">
    <text evidence="1">Catalyzes the ATP-dependent transfer of a sulfur to tRNA to produce 4-thiouridine in position 8 of tRNAs, which functions as a near-UV photosensor. Also catalyzes the transfer of sulfur to the sulfur carrier protein ThiS, forming ThiS-thiocarboxylate. This is a step in the synthesis of thiazole, in the thiamine biosynthesis pathway. The sulfur is donated as persulfide by IscS.</text>
</comment>
<comment type="catalytic activity">
    <reaction evidence="1">
        <text>[ThiI sulfur-carrier protein]-S-sulfanyl-L-cysteine + a uridine in tRNA + 2 reduced [2Fe-2S]-[ferredoxin] + ATP + H(+) = [ThiI sulfur-carrier protein]-L-cysteine + a 4-thiouridine in tRNA + 2 oxidized [2Fe-2S]-[ferredoxin] + AMP + diphosphate</text>
        <dbReference type="Rhea" id="RHEA:24176"/>
        <dbReference type="Rhea" id="RHEA-COMP:10000"/>
        <dbReference type="Rhea" id="RHEA-COMP:10001"/>
        <dbReference type="Rhea" id="RHEA-COMP:13337"/>
        <dbReference type="Rhea" id="RHEA-COMP:13338"/>
        <dbReference type="Rhea" id="RHEA-COMP:13339"/>
        <dbReference type="Rhea" id="RHEA-COMP:13340"/>
        <dbReference type="ChEBI" id="CHEBI:15378"/>
        <dbReference type="ChEBI" id="CHEBI:29950"/>
        <dbReference type="ChEBI" id="CHEBI:30616"/>
        <dbReference type="ChEBI" id="CHEBI:33019"/>
        <dbReference type="ChEBI" id="CHEBI:33737"/>
        <dbReference type="ChEBI" id="CHEBI:33738"/>
        <dbReference type="ChEBI" id="CHEBI:61963"/>
        <dbReference type="ChEBI" id="CHEBI:65315"/>
        <dbReference type="ChEBI" id="CHEBI:136798"/>
        <dbReference type="ChEBI" id="CHEBI:456215"/>
        <dbReference type="EC" id="2.8.1.4"/>
    </reaction>
</comment>
<comment type="catalytic activity">
    <reaction evidence="1">
        <text>[ThiS sulfur-carrier protein]-C-terminal Gly-Gly-AMP + S-sulfanyl-L-cysteinyl-[cysteine desulfurase] + AH2 = [ThiS sulfur-carrier protein]-C-terminal-Gly-aminoethanethioate + L-cysteinyl-[cysteine desulfurase] + A + AMP + 2 H(+)</text>
        <dbReference type="Rhea" id="RHEA:43340"/>
        <dbReference type="Rhea" id="RHEA-COMP:12157"/>
        <dbReference type="Rhea" id="RHEA-COMP:12158"/>
        <dbReference type="Rhea" id="RHEA-COMP:12910"/>
        <dbReference type="Rhea" id="RHEA-COMP:19908"/>
        <dbReference type="ChEBI" id="CHEBI:13193"/>
        <dbReference type="ChEBI" id="CHEBI:15378"/>
        <dbReference type="ChEBI" id="CHEBI:17499"/>
        <dbReference type="ChEBI" id="CHEBI:29950"/>
        <dbReference type="ChEBI" id="CHEBI:61963"/>
        <dbReference type="ChEBI" id="CHEBI:90618"/>
        <dbReference type="ChEBI" id="CHEBI:232372"/>
        <dbReference type="ChEBI" id="CHEBI:456215"/>
    </reaction>
</comment>
<comment type="pathway">
    <text evidence="1">Cofactor biosynthesis; thiamine diphosphate biosynthesis.</text>
</comment>
<comment type="subcellular location">
    <subcellularLocation>
        <location evidence="1">Cytoplasm</location>
    </subcellularLocation>
</comment>
<comment type="similarity">
    <text evidence="1">Belongs to the ThiI family.</text>
</comment>
<feature type="chain" id="PRO_0000154900" description="Probable tRNA sulfurtransferase">
    <location>
        <begin position="1"/>
        <end position="371"/>
    </location>
</feature>
<feature type="domain" description="THUMP" evidence="1">
    <location>
        <begin position="54"/>
        <end position="156"/>
    </location>
</feature>
<feature type="binding site" evidence="1">
    <location>
        <begin position="174"/>
        <end position="175"/>
    </location>
    <ligand>
        <name>ATP</name>
        <dbReference type="ChEBI" id="CHEBI:30616"/>
    </ligand>
</feature>
<feature type="binding site" evidence="1">
    <location>
        <begin position="199"/>
        <end position="200"/>
    </location>
    <ligand>
        <name>ATP</name>
        <dbReference type="ChEBI" id="CHEBI:30616"/>
    </ligand>
</feature>
<feature type="binding site" evidence="1">
    <location>
        <position position="254"/>
    </location>
    <ligand>
        <name>ATP</name>
        <dbReference type="ChEBI" id="CHEBI:30616"/>
    </ligand>
</feature>
<feature type="binding site" evidence="1">
    <location>
        <position position="276"/>
    </location>
    <ligand>
        <name>ATP</name>
        <dbReference type="ChEBI" id="CHEBI:30616"/>
    </ligand>
</feature>
<feature type="binding site" evidence="1">
    <location>
        <position position="285"/>
    </location>
    <ligand>
        <name>ATP</name>
        <dbReference type="ChEBI" id="CHEBI:30616"/>
    </ligand>
</feature>
<proteinExistence type="inferred from homology"/>
<reference key="1">
    <citation type="journal article" date="2001" name="Proc. Natl. Acad. Sci. U.S.A.">
        <title>The complete genome of the crenarchaeon Sulfolobus solfataricus P2.</title>
        <authorList>
            <person name="She Q."/>
            <person name="Singh R.K."/>
            <person name="Confalonieri F."/>
            <person name="Zivanovic Y."/>
            <person name="Allard G."/>
            <person name="Awayez M.J."/>
            <person name="Chan-Weiher C.C.-Y."/>
            <person name="Clausen I.G."/>
            <person name="Curtis B.A."/>
            <person name="De Moors A."/>
            <person name="Erauso G."/>
            <person name="Fletcher C."/>
            <person name="Gordon P.M.K."/>
            <person name="Heikamp-de Jong I."/>
            <person name="Jeffries A.C."/>
            <person name="Kozera C.J."/>
            <person name="Medina N."/>
            <person name="Peng X."/>
            <person name="Thi-Ngoc H.P."/>
            <person name="Redder P."/>
            <person name="Schenk M.E."/>
            <person name="Theriault C."/>
            <person name="Tolstrup N."/>
            <person name="Charlebois R.L."/>
            <person name="Doolittle W.F."/>
            <person name="Duguet M."/>
            <person name="Gaasterland T."/>
            <person name="Garrett R.A."/>
            <person name="Ragan M.A."/>
            <person name="Sensen C.W."/>
            <person name="Van der Oost J."/>
        </authorList>
    </citation>
    <scope>NUCLEOTIDE SEQUENCE [LARGE SCALE GENOMIC DNA]</scope>
    <source>
        <strain>ATCC 35092 / DSM 1617 / JCM 11322 / P2</strain>
    </source>
</reference>
<sequence length="371" mass="41848">MLVIIRPSGEIALKSPRSRRNFEYTLINNIRNTIGGGKIWRSQGVILLEVNDNNANIEALSEVFGISSFSPVIAIKSNNLEDIVNKAKEIFAEIVKGKIFAVRAKRIGSHSFTSLDVERRAGEALYPYSKGVDLENPEVEIFIEIRNEMTYFYHKVIKGPKGLPVGVAGKTVVLFSGGIDSPVATWMMMKRGSVPIILNFNLGGDLHKELVLKELNMLKRWSGGHKLKIFIVKGTDVFIKLSQVERRSRVVMLKRVMYKTAEKLCEKTNAKSITTGESLSQVSSQTMANLYVTEYGIKYPIFRPLIGFDKEEIVDIARKIGTYKHSIKLPEYCAISTKARTSEDLNEILKNEERLNVDYEKILENSEVIEL</sequence>